<name>DHA2_STAA3</name>
<evidence type="ECO:0000250" key="1"/>
<evidence type="ECO:0000255" key="2"/>
<evidence type="ECO:0000305" key="3"/>
<keyword id="KW-0520">NAD</keyword>
<keyword id="KW-0560">Oxidoreductase</keyword>
<proteinExistence type="inferred from homology"/>
<accession>Q2FG29</accession>
<comment type="function">
    <text evidence="1">May play a role in cell wall synthesis as L-alanine is an important constituent of the peptidoglycan layer.</text>
</comment>
<comment type="catalytic activity">
    <reaction>
        <text>L-alanine + NAD(+) + H2O = pyruvate + NH4(+) + NADH + H(+)</text>
        <dbReference type="Rhea" id="RHEA:18405"/>
        <dbReference type="ChEBI" id="CHEBI:15361"/>
        <dbReference type="ChEBI" id="CHEBI:15377"/>
        <dbReference type="ChEBI" id="CHEBI:15378"/>
        <dbReference type="ChEBI" id="CHEBI:28938"/>
        <dbReference type="ChEBI" id="CHEBI:57540"/>
        <dbReference type="ChEBI" id="CHEBI:57945"/>
        <dbReference type="ChEBI" id="CHEBI:57972"/>
        <dbReference type="EC" id="1.4.1.1"/>
    </reaction>
</comment>
<comment type="pathway">
    <text>Amino-acid degradation; L-alanine degradation via dehydrogenase pathway; NH(3) and pyruvate from L-alanine: step 1/1.</text>
</comment>
<comment type="similarity">
    <text evidence="3">Belongs to the AlaDH/PNT family.</text>
</comment>
<gene>
    <name type="primary">ald2</name>
    <name type="ordered locus">SAUSA300_1655</name>
</gene>
<reference key="1">
    <citation type="journal article" date="2006" name="Lancet">
        <title>Complete genome sequence of USA300, an epidemic clone of community-acquired meticillin-resistant Staphylococcus aureus.</title>
        <authorList>
            <person name="Diep B.A."/>
            <person name="Gill S.R."/>
            <person name="Chang R.F."/>
            <person name="Phan T.H."/>
            <person name="Chen J.H."/>
            <person name="Davidson M.G."/>
            <person name="Lin F."/>
            <person name="Lin J."/>
            <person name="Carleton H.A."/>
            <person name="Mongodin E.F."/>
            <person name="Sensabaugh G.F."/>
            <person name="Perdreau-Remington F."/>
        </authorList>
    </citation>
    <scope>NUCLEOTIDE SEQUENCE [LARGE SCALE GENOMIC DNA]</scope>
    <source>
        <strain>USA300</strain>
    </source>
</reference>
<sequence>MKIGIPREIKNNENRVGLSPSGVHALVESGHTVLVETNAGSGSFFEDVDYKEAGAEIVAEQAKVWDVDMVIKVKEPLESEYPYFKEGLVLFTYLHLANEEKLTQALIDRKVISIAYETVQLPDRSLPLLSPMSEVAGRMSAQVGAEFLQKLNGGMGILLGGVPGVPKGKVTIIGGGQAGTNAAKIALGLGADVTILDVNPKRLQQLDDLFGGRVHTIMSNPLNIELYVKQSDLVIGAVLIPGAKAPRLVTEDMIKQMKNGSVIIDIAIDQGGIFETTDKITTHDDPTYIKHGVVHYAVANMPGAVPRTSTLALNNATLPYALMLANKGYREAFKSNQPLSLGLNTYKGHVTNKGVAEAFEMEYKSVEEALQL</sequence>
<feature type="chain" id="PRO_0000287323" description="Alanine dehydrogenase 2">
    <location>
        <begin position="1"/>
        <end position="372"/>
    </location>
</feature>
<feature type="active site" evidence="2">
    <location>
        <position position="95"/>
    </location>
</feature>
<feature type="binding site" evidence="1">
    <location>
        <begin position="169"/>
        <end position="199"/>
    </location>
    <ligand>
        <name>NAD(+)</name>
        <dbReference type="ChEBI" id="CHEBI:57540"/>
    </ligand>
</feature>
<organism>
    <name type="scientific">Staphylococcus aureus (strain USA300)</name>
    <dbReference type="NCBI Taxonomy" id="367830"/>
    <lineage>
        <taxon>Bacteria</taxon>
        <taxon>Bacillati</taxon>
        <taxon>Bacillota</taxon>
        <taxon>Bacilli</taxon>
        <taxon>Bacillales</taxon>
        <taxon>Staphylococcaceae</taxon>
        <taxon>Staphylococcus</taxon>
    </lineage>
</organism>
<dbReference type="EC" id="1.4.1.1"/>
<dbReference type="EMBL" id="CP000255">
    <property type="protein sequence ID" value="ABD21879.1"/>
    <property type="molecule type" value="Genomic_DNA"/>
</dbReference>
<dbReference type="SMR" id="Q2FG29"/>
<dbReference type="KEGG" id="saa:SAUSA300_1655"/>
<dbReference type="HOGENOM" id="CLU_003376_3_0_9"/>
<dbReference type="OMA" id="HVKGFMG"/>
<dbReference type="UniPathway" id="UPA00527">
    <property type="reaction ID" value="UER00585"/>
</dbReference>
<dbReference type="Proteomes" id="UP000001939">
    <property type="component" value="Chromosome"/>
</dbReference>
<dbReference type="GO" id="GO:0005886">
    <property type="term" value="C:plasma membrane"/>
    <property type="evidence" value="ECO:0007669"/>
    <property type="project" value="TreeGrafter"/>
</dbReference>
<dbReference type="GO" id="GO:0000286">
    <property type="term" value="F:alanine dehydrogenase activity"/>
    <property type="evidence" value="ECO:0007669"/>
    <property type="project" value="UniProtKB-EC"/>
</dbReference>
<dbReference type="GO" id="GO:0042853">
    <property type="term" value="P:L-alanine catabolic process"/>
    <property type="evidence" value="ECO:0007669"/>
    <property type="project" value="UniProtKB-UniPathway"/>
</dbReference>
<dbReference type="CDD" id="cd05305">
    <property type="entry name" value="L-AlaDH"/>
    <property type="match status" value="1"/>
</dbReference>
<dbReference type="FunFam" id="3.40.50.720:FF:000049">
    <property type="entry name" value="Alanine dehydrogenase"/>
    <property type="match status" value="1"/>
</dbReference>
<dbReference type="Gene3D" id="3.40.50.720">
    <property type="entry name" value="NAD(P)-binding Rossmann-like Domain"/>
    <property type="match status" value="2"/>
</dbReference>
<dbReference type="InterPro" id="IPR008141">
    <property type="entry name" value="Ala_DH"/>
</dbReference>
<dbReference type="InterPro" id="IPR008143">
    <property type="entry name" value="Ala_DH/PNT_CS2"/>
</dbReference>
<dbReference type="InterPro" id="IPR008142">
    <property type="entry name" value="AlaDH/PNT_CS1"/>
</dbReference>
<dbReference type="InterPro" id="IPR007886">
    <property type="entry name" value="AlaDH/PNT_N"/>
</dbReference>
<dbReference type="InterPro" id="IPR007698">
    <property type="entry name" value="AlaDH/PNT_NAD(H)-bd"/>
</dbReference>
<dbReference type="InterPro" id="IPR036291">
    <property type="entry name" value="NAD(P)-bd_dom_sf"/>
</dbReference>
<dbReference type="NCBIfam" id="TIGR00518">
    <property type="entry name" value="alaDH"/>
    <property type="match status" value="1"/>
</dbReference>
<dbReference type="PANTHER" id="PTHR42795">
    <property type="entry name" value="ALANINE DEHYDROGENASE"/>
    <property type="match status" value="1"/>
</dbReference>
<dbReference type="PANTHER" id="PTHR42795:SF1">
    <property type="entry name" value="ALANINE DEHYDROGENASE"/>
    <property type="match status" value="1"/>
</dbReference>
<dbReference type="Pfam" id="PF01262">
    <property type="entry name" value="AlaDh_PNT_C"/>
    <property type="match status" value="1"/>
</dbReference>
<dbReference type="Pfam" id="PF05222">
    <property type="entry name" value="AlaDh_PNT_N"/>
    <property type="match status" value="1"/>
</dbReference>
<dbReference type="PIRSF" id="PIRSF000183">
    <property type="entry name" value="Alanine_dh"/>
    <property type="match status" value="1"/>
</dbReference>
<dbReference type="SMART" id="SM01002">
    <property type="entry name" value="AlaDh_PNT_C"/>
    <property type="match status" value="1"/>
</dbReference>
<dbReference type="SMART" id="SM01003">
    <property type="entry name" value="AlaDh_PNT_N"/>
    <property type="match status" value="1"/>
</dbReference>
<dbReference type="SUPFAM" id="SSF52283">
    <property type="entry name" value="Formate/glycerate dehydrogenase catalytic domain-like"/>
    <property type="match status" value="1"/>
</dbReference>
<dbReference type="SUPFAM" id="SSF51735">
    <property type="entry name" value="NAD(P)-binding Rossmann-fold domains"/>
    <property type="match status" value="1"/>
</dbReference>
<dbReference type="PROSITE" id="PS00836">
    <property type="entry name" value="ALADH_PNT_1"/>
    <property type="match status" value="1"/>
</dbReference>
<dbReference type="PROSITE" id="PS00837">
    <property type="entry name" value="ALADH_PNT_2"/>
    <property type="match status" value="1"/>
</dbReference>
<protein>
    <recommendedName>
        <fullName>Alanine dehydrogenase 2</fullName>
        <ecNumber>1.4.1.1</ecNumber>
    </recommendedName>
</protein>